<protein>
    <recommendedName>
        <fullName evidence="1">Integration host factor subunit beta</fullName>
        <shortName evidence="1">IHF-beta</shortName>
    </recommendedName>
</protein>
<reference key="1">
    <citation type="submission" date="2007-03" db="EMBL/GenBank/DDBJ databases">
        <title>Complete sequence of chromosome 1 of Burkholderia vietnamiensis G4.</title>
        <authorList>
            <consortium name="US DOE Joint Genome Institute"/>
            <person name="Copeland A."/>
            <person name="Lucas S."/>
            <person name="Lapidus A."/>
            <person name="Barry K."/>
            <person name="Detter J.C."/>
            <person name="Glavina del Rio T."/>
            <person name="Hammon N."/>
            <person name="Israni S."/>
            <person name="Dalin E."/>
            <person name="Tice H."/>
            <person name="Pitluck S."/>
            <person name="Chain P."/>
            <person name="Malfatti S."/>
            <person name="Shin M."/>
            <person name="Vergez L."/>
            <person name="Schmutz J."/>
            <person name="Larimer F."/>
            <person name="Land M."/>
            <person name="Hauser L."/>
            <person name="Kyrpides N."/>
            <person name="Tiedje J."/>
            <person name="Richardson P."/>
        </authorList>
    </citation>
    <scope>NUCLEOTIDE SEQUENCE [LARGE SCALE GENOMIC DNA]</scope>
    <source>
        <strain>G4 / LMG 22486</strain>
    </source>
</reference>
<evidence type="ECO:0000255" key="1">
    <source>
        <dbReference type="HAMAP-Rule" id="MF_00381"/>
    </source>
</evidence>
<evidence type="ECO:0000256" key="2">
    <source>
        <dbReference type="SAM" id="MobiDB-lite"/>
    </source>
</evidence>
<proteinExistence type="inferred from homology"/>
<organism>
    <name type="scientific">Burkholderia vietnamiensis (strain G4 / LMG 22486)</name>
    <name type="common">Burkholderia cepacia (strain R1808)</name>
    <dbReference type="NCBI Taxonomy" id="269482"/>
    <lineage>
        <taxon>Bacteria</taxon>
        <taxon>Pseudomonadati</taxon>
        <taxon>Pseudomonadota</taxon>
        <taxon>Betaproteobacteria</taxon>
        <taxon>Burkholderiales</taxon>
        <taxon>Burkholderiaceae</taxon>
        <taxon>Burkholderia</taxon>
        <taxon>Burkholderia cepacia complex</taxon>
    </lineage>
</organism>
<dbReference type="EMBL" id="CP000614">
    <property type="protein sequence ID" value="ABO53980.1"/>
    <property type="molecule type" value="Genomic_DNA"/>
</dbReference>
<dbReference type="SMR" id="A4JCH7"/>
<dbReference type="KEGG" id="bvi:Bcep1808_0969"/>
<dbReference type="eggNOG" id="COG0776">
    <property type="taxonomic scope" value="Bacteria"/>
</dbReference>
<dbReference type="HOGENOM" id="CLU_105066_2_0_4"/>
<dbReference type="Proteomes" id="UP000002287">
    <property type="component" value="Chromosome 1"/>
</dbReference>
<dbReference type="GO" id="GO:0005694">
    <property type="term" value="C:chromosome"/>
    <property type="evidence" value="ECO:0007669"/>
    <property type="project" value="InterPro"/>
</dbReference>
<dbReference type="GO" id="GO:0005829">
    <property type="term" value="C:cytosol"/>
    <property type="evidence" value="ECO:0007669"/>
    <property type="project" value="TreeGrafter"/>
</dbReference>
<dbReference type="GO" id="GO:0003677">
    <property type="term" value="F:DNA binding"/>
    <property type="evidence" value="ECO:0007669"/>
    <property type="project" value="UniProtKB-UniRule"/>
</dbReference>
<dbReference type="GO" id="GO:0030527">
    <property type="term" value="F:structural constituent of chromatin"/>
    <property type="evidence" value="ECO:0007669"/>
    <property type="project" value="InterPro"/>
</dbReference>
<dbReference type="GO" id="GO:0006310">
    <property type="term" value="P:DNA recombination"/>
    <property type="evidence" value="ECO:0007669"/>
    <property type="project" value="UniProtKB-UniRule"/>
</dbReference>
<dbReference type="GO" id="GO:0006355">
    <property type="term" value="P:regulation of DNA-templated transcription"/>
    <property type="evidence" value="ECO:0007669"/>
    <property type="project" value="UniProtKB-UniRule"/>
</dbReference>
<dbReference type="GO" id="GO:0006417">
    <property type="term" value="P:regulation of translation"/>
    <property type="evidence" value="ECO:0007669"/>
    <property type="project" value="UniProtKB-UniRule"/>
</dbReference>
<dbReference type="CDD" id="cd13836">
    <property type="entry name" value="IHF_B"/>
    <property type="match status" value="1"/>
</dbReference>
<dbReference type="Gene3D" id="4.10.520.10">
    <property type="entry name" value="IHF-like DNA-binding proteins"/>
    <property type="match status" value="1"/>
</dbReference>
<dbReference type="HAMAP" id="MF_00381">
    <property type="entry name" value="IHF_beta"/>
    <property type="match status" value="1"/>
</dbReference>
<dbReference type="InterPro" id="IPR000119">
    <property type="entry name" value="Hist_DNA-bd"/>
</dbReference>
<dbReference type="InterPro" id="IPR010992">
    <property type="entry name" value="IHF-like_DNA-bd_dom_sf"/>
</dbReference>
<dbReference type="InterPro" id="IPR005685">
    <property type="entry name" value="IHF_beta"/>
</dbReference>
<dbReference type="NCBIfam" id="TIGR00988">
    <property type="entry name" value="hip"/>
    <property type="match status" value="1"/>
</dbReference>
<dbReference type="NCBIfam" id="NF001222">
    <property type="entry name" value="PRK00199.1"/>
    <property type="match status" value="1"/>
</dbReference>
<dbReference type="PANTHER" id="PTHR33175">
    <property type="entry name" value="DNA-BINDING PROTEIN HU"/>
    <property type="match status" value="1"/>
</dbReference>
<dbReference type="PANTHER" id="PTHR33175:SF5">
    <property type="entry name" value="INTEGRATION HOST FACTOR SUBUNIT BETA"/>
    <property type="match status" value="1"/>
</dbReference>
<dbReference type="Pfam" id="PF00216">
    <property type="entry name" value="Bac_DNA_binding"/>
    <property type="match status" value="1"/>
</dbReference>
<dbReference type="PRINTS" id="PR01727">
    <property type="entry name" value="DNABINDINGHU"/>
</dbReference>
<dbReference type="SMART" id="SM00411">
    <property type="entry name" value="BHL"/>
    <property type="match status" value="1"/>
</dbReference>
<dbReference type="SUPFAM" id="SSF47729">
    <property type="entry name" value="IHF-like DNA-binding proteins"/>
    <property type="match status" value="1"/>
</dbReference>
<keyword id="KW-0233">DNA recombination</keyword>
<keyword id="KW-0238">DNA-binding</keyword>
<keyword id="KW-0804">Transcription</keyword>
<keyword id="KW-0805">Transcription regulation</keyword>
<keyword id="KW-0810">Translation regulation</keyword>
<comment type="function">
    <text evidence="1">This protein is one of the two subunits of integration host factor, a specific DNA-binding protein that functions in genetic recombination as well as in transcriptional and translational control.</text>
</comment>
<comment type="subunit">
    <text evidence="1">Heterodimer of an alpha and a beta chain.</text>
</comment>
<comment type="similarity">
    <text evidence="1">Belongs to the bacterial histone-like protein family.</text>
</comment>
<feature type="chain" id="PRO_1000122206" description="Integration host factor subunit beta">
    <location>
        <begin position="1"/>
        <end position="107"/>
    </location>
</feature>
<feature type="region of interest" description="Disordered" evidence="2">
    <location>
        <begin position="56"/>
        <end position="107"/>
    </location>
</feature>
<feature type="compositionally biased region" description="Basic and acidic residues" evidence="2">
    <location>
        <begin position="82"/>
        <end position="101"/>
    </location>
</feature>
<gene>
    <name evidence="1" type="primary">ihfB</name>
    <name evidence="1" type="synonym">himD</name>
    <name type="ordered locus">Bcep1808_0969</name>
</gene>
<accession>A4JCH7</accession>
<sequence length="107" mass="11969">MTKSELVAQLALRFPQLVLKDADFAVKTMLDAMSDALSKGHRIEIRGFGSFGLNRRPARVGRNPKSGEKVQVPEKFVPHFKPGKELRERVDGRAGEPLKADDPDDER</sequence>
<name>IHFB_BURVG</name>